<protein>
    <recommendedName>
        <fullName evidence="1">tRNA pseudouridine synthase A</fullName>
        <ecNumber evidence="1">5.4.99.12</ecNumber>
    </recommendedName>
    <alternativeName>
        <fullName evidence="1">tRNA pseudouridine(38-40) synthase</fullName>
    </alternativeName>
    <alternativeName>
        <fullName evidence="1">tRNA pseudouridylate synthase I</fullName>
    </alternativeName>
    <alternativeName>
        <fullName evidence="1">tRNA-uridine isomerase I</fullName>
    </alternativeName>
</protein>
<dbReference type="EC" id="5.4.99.12" evidence="1"/>
<dbReference type="EMBL" id="CP000407">
    <property type="protein sequence ID" value="ABP89279.1"/>
    <property type="molecule type" value="Genomic_DNA"/>
</dbReference>
<dbReference type="SMR" id="A4VT40"/>
<dbReference type="STRING" id="391295.SSU05_0311"/>
<dbReference type="KEGG" id="ssu:SSU05_0311"/>
<dbReference type="eggNOG" id="COG0101">
    <property type="taxonomic scope" value="Bacteria"/>
</dbReference>
<dbReference type="HOGENOM" id="CLU_014673_0_1_9"/>
<dbReference type="GO" id="GO:0003723">
    <property type="term" value="F:RNA binding"/>
    <property type="evidence" value="ECO:0007669"/>
    <property type="project" value="InterPro"/>
</dbReference>
<dbReference type="GO" id="GO:0160147">
    <property type="term" value="F:tRNA pseudouridine(38-40) synthase activity"/>
    <property type="evidence" value="ECO:0007669"/>
    <property type="project" value="UniProtKB-EC"/>
</dbReference>
<dbReference type="GO" id="GO:0031119">
    <property type="term" value="P:tRNA pseudouridine synthesis"/>
    <property type="evidence" value="ECO:0007669"/>
    <property type="project" value="UniProtKB-UniRule"/>
</dbReference>
<dbReference type="CDD" id="cd02570">
    <property type="entry name" value="PseudoU_synth_EcTruA"/>
    <property type="match status" value="1"/>
</dbReference>
<dbReference type="FunFam" id="3.30.70.580:FF:000001">
    <property type="entry name" value="tRNA pseudouridine synthase A"/>
    <property type="match status" value="1"/>
</dbReference>
<dbReference type="Gene3D" id="3.30.70.660">
    <property type="entry name" value="Pseudouridine synthase I, catalytic domain, C-terminal subdomain"/>
    <property type="match status" value="1"/>
</dbReference>
<dbReference type="Gene3D" id="3.30.70.580">
    <property type="entry name" value="Pseudouridine synthase I, catalytic domain, N-terminal subdomain"/>
    <property type="match status" value="1"/>
</dbReference>
<dbReference type="HAMAP" id="MF_00171">
    <property type="entry name" value="TruA"/>
    <property type="match status" value="1"/>
</dbReference>
<dbReference type="InterPro" id="IPR020103">
    <property type="entry name" value="PsdUridine_synth_cat_dom_sf"/>
</dbReference>
<dbReference type="InterPro" id="IPR001406">
    <property type="entry name" value="PsdUridine_synth_TruA"/>
</dbReference>
<dbReference type="InterPro" id="IPR020097">
    <property type="entry name" value="PsdUridine_synth_TruA_a/b_dom"/>
</dbReference>
<dbReference type="InterPro" id="IPR020095">
    <property type="entry name" value="PsdUridine_synth_TruA_C"/>
</dbReference>
<dbReference type="InterPro" id="IPR020094">
    <property type="entry name" value="TruA/RsuA/RluB/E/F_N"/>
</dbReference>
<dbReference type="NCBIfam" id="TIGR00071">
    <property type="entry name" value="hisT_truA"/>
    <property type="match status" value="1"/>
</dbReference>
<dbReference type="PANTHER" id="PTHR11142">
    <property type="entry name" value="PSEUDOURIDYLATE SYNTHASE"/>
    <property type="match status" value="1"/>
</dbReference>
<dbReference type="PANTHER" id="PTHR11142:SF0">
    <property type="entry name" value="TRNA PSEUDOURIDINE SYNTHASE-LIKE 1"/>
    <property type="match status" value="1"/>
</dbReference>
<dbReference type="Pfam" id="PF01416">
    <property type="entry name" value="PseudoU_synth_1"/>
    <property type="match status" value="2"/>
</dbReference>
<dbReference type="PIRSF" id="PIRSF001430">
    <property type="entry name" value="tRNA_psdUrid_synth"/>
    <property type="match status" value="1"/>
</dbReference>
<dbReference type="SUPFAM" id="SSF55120">
    <property type="entry name" value="Pseudouridine synthase"/>
    <property type="match status" value="1"/>
</dbReference>
<comment type="function">
    <text evidence="1">Formation of pseudouridine at positions 38, 39 and 40 in the anticodon stem and loop of transfer RNAs.</text>
</comment>
<comment type="catalytic activity">
    <reaction evidence="1">
        <text>uridine(38/39/40) in tRNA = pseudouridine(38/39/40) in tRNA</text>
        <dbReference type="Rhea" id="RHEA:22376"/>
        <dbReference type="Rhea" id="RHEA-COMP:10085"/>
        <dbReference type="Rhea" id="RHEA-COMP:10087"/>
        <dbReference type="ChEBI" id="CHEBI:65314"/>
        <dbReference type="ChEBI" id="CHEBI:65315"/>
        <dbReference type="EC" id="5.4.99.12"/>
    </reaction>
</comment>
<comment type="subunit">
    <text evidence="1">Homodimer.</text>
</comment>
<comment type="similarity">
    <text evidence="1">Belongs to the tRNA pseudouridine synthase TruA family.</text>
</comment>
<organism>
    <name type="scientific">Streptococcus suis (strain 05ZYH33)</name>
    <dbReference type="NCBI Taxonomy" id="391295"/>
    <lineage>
        <taxon>Bacteria</taxon>
        <taxon>Bacillati</taxon>
        <taxon>Bacillota</taxon>
        <taxon>Bacilli</taxon>
        <taxon>Lactobacillales</taxon>
        <taxon>Streptococcaceae</taxon>
        <taxon>Streptococcus</taxon>
    </lineage>
</organism>
<gene>
    <name evidence="1" type="primary">truA</name>
    <name type="ordered locus">SSU05_0311</name>
</gene>
<proteinExistence type="inferred from homology"/>
<accession>A4VT40</accession>
<reference key="1">
    <citation type="journal article" date="2007" name="PLoS ONE">
        <title>A glimpse of streptococcal toxic shock syndrome from comparative genomics of S. suis 2 Chinese isolates.</title>
        <authorList>
            <person name="Chen C."/>
            <person name="Tang J."/>
            <person name="Dong W."/>
            <person name="Wang C."/>
            <person name="Feng Y."/>
            <person name="Wang J."/>
            <person name="Zheng F."/>
            <person name="Pan X."/>
            <person name="Liu D."/>
            <person name="Li M."/>
            <person name="Song Y."/>
            <person name="Zhu X."/>
            <person name="Sun H."/>
            <person name="Feng T."/>
            <person name="Guo Z."/>
            <person name="Ju A."/>
            <person name="Ge J."/>
            <person name="Dong Y."/>
            <person name="Sun W."/>
            <person name="Jiang Y."/>
            <person name="Wang J."/>
            <person name="Yan J."/>
            <person name="Yang H."/>
            <person name="Wang X."/>
            <person name="Gao G.F."/>
            <person name="Yang R."/>
            <person name="Wang J."/>
            <person name="Yu J."/>
        </authorList>
    </citation>
    <scope>NUCLEOTIDE SEQUENCE [LARGE SCALE GENOMIC DNA]</scope>
    <source>
        <strain>05ZYH33</strain>
    </source>
</reference>
<feature type="chain" id="PRO_1000017200" description="tRNA pseudouridine synthase A">
    <location>
        <begin position="1"/>
        <end position="249"/>
    </location>
</feature>
<feature type="active site" description="Nucleophile" evidence="1">
    <location>
        <position position="53"/>
    </location>
</feature>
<feature type="binding site" evidence="1">
    <location>
        <position position="111"/>
    </location>
    <ligand>
        <name>substrate</name>
    </ligand>
</feature>
<keyword id="KW-0413">Isomerase</keyword>
<keyword id="KW-0819">tRNA processing</keyword>
<sequence>MTRYKAIISYDGHDFSGFQRQPHARTVQEEIEKTLVRLNSGQPVTVHGAGRTDAGVHAYGQVIHFDLAGSRDVEKLRFALDTQTSEDIDVVSVEQVADDFHCRYAKHSKTYEFLVDIGRPKNPMMRHYATFYPYDLDLSLIEEAIQDLVGTHDFTGFTASGTSVEDNVRTITVASMEYDQQRQFLIFTFSGNGFLYKQVRNMVGTLLKIGNGRMPVGQIKRILAEKDRGLAGPTAAGNGLYLKEIIYED</sequence>
<name>TRUA_STRSY</name>
<evidence type="ECO:0000255" key="1">
    <source>
        <dbReference type="HAMAP-Rule" id="MF_00171"/>
    </source>
</evidence>